<comment type="similarity">
    <text evidence="1">Belongs to the bacterial ribosomal protein bL35 family.</text>
</comment>
<organism>
    <name type="scientific">Persephonella marina (strain DSM 14350 / EX-H1)</name>
    <dbReference type="NCBI Taxonomy" id="123214"/>
    <lineage>
        <taxon>Bacteria</taxon>
        <taxon>Pseudomonadati</taxon>
        <taxon>Aquificota</taxon>
        <taxon>Aquificia</taxon>
        <taxon>Aquificales</taxon>
        <taxon>Hydrogenothermaceae</taxon>
        <taxon>Persephonella</taxon>
    </lineage>
</organism>
<keyword id="KW-1185">Reference proteome</keyword>
<keyword id="KW-0687">Ribonucleoprotein</keyword>
<keyword id="KW-0689">Ribosomal protein</keyword>
<reference key="1">
    <citation type="journal article" date="2009" name="J. Bacteriol.">
        <title>Complete and draft genome sequences of six members of the Aquificales.</title>
        <authorList>
            <person name="Reysenbach A.-L."/>
            <person name="Hamamura N."/>
            <person name="Podar M."/>
            <person name="Griffiths E."/>
            <person name="Ferreira S."/>
            <person name="Hochstein R."/>
            <person name="Heidelberg J."/>
            <person name="Johnson J."/>
            <person name="Mead D."/>
            <person name="Pohorille A."/>
            <person name="Sarmiento M."/>
            <person name="Schweighofer K."/>
            <person name="Seshadri R."/>
            <person name="Voytek M.A."/>
        </authorList>
    </citation>
    <scope>NUCLEOTIDE SEQUENCE [LARGE SCALE GENOMIC DNA]</scope>
    <source>
        <strain>DSM 14350 / EX-H1</strain>
    </source>
</reference>
<protein>
    <recommendedName>
        <fullName evidence="1">Large ribosomal subunit protein bL35</fullName>
    </recommendedName>
    <alternativeName>
        <fullName evidence="2">50S ribosomal protein L35</fullName>
    </alternativeName>
</protein>
<gene>
    <name evidence="1" type="primary">rpmI</name>
    <name type="ordered locus">PERMA_0074</name>
</gene>
<proteinExistence type="inferred from homology"/>
<accession>C0QT57</accession>
<feature type="chain" id="PRO_1000146153" description="Large ribosomal subunit protein bL35">
    <location>
        <begin position="1"/>
        <end position="68"/>
    </location>
</feature>
<evidence type="ECO:0000255" key="1">
    <source>
        <dbReference type="HAMAP-Rule" id="MF_00514"/>
    </source>
</evidence>
<evidence type="ECO:0000305" key="2"/>
<name>RL35_PERMH</name>
<dbReference type="EMBL" id="CP001230">
    <property type="protein sequence ID" value="ACO04593.1"/>
    <property type="molecule type" value="Genomic_DNA"/>
</dbReference>
<dbReference type="RefSeq" id="WP_012676830.1">
    <property type="nucleotide sequence ID" value="NC_012440.1"/>
</dbReference>
<dbReference type="SMR" id="C0QT57"/>
<dbReference type="STRING" id="123214.PERMA_0074"/>
<dbReference type="PaxDb" id="123214-PERMA_0074"/>
<dbReference type="KEGG" id="pmx:PERMA_0074"/>
<dbReference type="eggNOG" id="COG0291">
    <property type="taxonomic scope" value="Bacteria"/>
</dbReference>
<dbReference type="HOGENOM" id="CLU_169643_4_3_0"/>
<dbReference type="OrthoDB" id="47476at2"/>
<dbReference type="Proteomes" id="UP000001366">
    <property type="component" value="Chromosome"/>
</dbReference>
<dbReference type="GO" id="GO:0022625">
    <property type="term" value="C:cytosolic large ribosomal subunit"/>
    <property type="evidence" value="ECO:0007669"/>
    <property type="project" value="TreeGrafter"/>
</dbReference>
<dbReference type="GO" id="GO:0003735">
    <property type="term" value="F:structural constituent of ribosome"/>
    <property type="evidence" value="ECO:0007669"/>
    <property type="project" value="InterPro"/>
</dbReference>
<dbReference type="GO" id="GO:0006412">
    <property type="term" value="P:translation"/>
    <property type="evidence" value="ECO:0007669"/>
    <property type="project" value="UniProtKB-UniRule"/>
</dbReference>
<dbReference type="FunFam" id="4.10.410.60:FF:000001">
    <property type="entry name" value="50S ribosomal protein L35"/>
    <property type="match status" value="1"/>
</dbReference>
<dbReference type="Gene3D" id="4.10.410.60">
    <property type="match status" value="1"/>
</dbReference>
<dbReference type="HAMAP" id="MF_00514">
    <property type="entry name" value="Ribosomal_bL35"/>
    <property type="match status" value="1"/>
</dbReference>
<dbReference type="InterPro" id="IPR001706">
    <property type="entry name" value="Ribosomal_bL35"/>
</dbReference>
<dbReference type="InterPro" id="IPR021137">
    <property type="entry name" value="Ribosomal_bL35-like"/>
</dbReference>
<dbReference type="InterPro" id="IPR037229">
    <property type="entry name" value="Ribosomal_bL35_sf"/>
</dbReference>
<dbReference type="NCBIfam" id="TIGR00001">
    <property type="entry name" value="rpmI_bact"/>
    <property type="match status" value="1"/>
</dbReference>
<dbReference type="PANTHER" id="PTHR33343">
    <property type="entry name" value="54S RIBOSOMAL PROTEIN BL35M"/>
    <property type="match status" value="1"/>
</dbReference>
<dbReference type="PANTHER" id="PTHR33343:SF1">
    <property type="entry name" value="LARGE RIBOSOMAL SUBUNIT PROTEIN BL35M"/>
    <property type="match status" value="1"/>
</dbReference>
<dbReference type="Pfam" id="PF01632">
    <property type="entry name" value="Ribosomal_L35p"/>
    <property type="match status" value="1"/>
</dbReference>
<dbReference type="PRINTS" id="PR00064">
    <property type="entry name" value="RIBOSOMALL35"/>
</dbReference>
<dbReference type="SUPFAM" id="SSF143034">
    <property type="entry name" value="L35p-like"/>
    <property type="match status" value="1"/>
</dbReference>
<sequence>MAKVKMKTNKTAAKRFKVTAKGKIKYWKGGVSHYNTKKSSKRKRQGRKADYVPENIADRVKQLIPYQV</sequence>